<sequence>MEQQKIPQATAKRLPLYYRFIQNLSLSGKQRVSSAELSEAVKVDSATIRRDFSYFGALGKKGYGYNVNYLLSFFRETLDQDDITRVALIGVGNLGTAFLHYNFTKNNNTKIEMAFDVSEEKVGTEIGGIPVYHLDELEERLSSDIQVAILTVPATVAQSVADRLAETNVHGILNFTPARLNVSDNIRIHHIDLAVELQTLVYFLKNYPQ</sequence>
<reference key="1">
    <citation type="submission" date="2009-04" db="EMBL/GenBank/DDBJ databases">
        <title>Genome sequence of Bacillus anthracis A0248.</title>
        <authorList>
            <person name="Dodson R.J."/>
            <person name="Munk A.C."/>
            <person name="Bruce D."/>
            <person name="Detter C."/>
            <person name="Tapia R."/>
            <person name="Sutton G."/>
            <person name="Sims D."/>
            <person name="Brettin T."/>
        </authorList>
    </citation>
    <scope>NUCLEOTIDE SEQUENCE [LARGE SCALE GENOMIC DNA]</scope>
    <source>
        <strain>A0248</strain>
    </source>
</reference>
<feature type="chain" id="PRO_1000164075" description="Redox-sensing transcriptional repressor Rex">
    <location>
        <begin position="1"/>
        <end position="209"/>
    </location>
</feature>
<feature type="DNA-binding region" description="H-T-H motif" evidence="1">
    <location>
        <begin position="16"/>
        <end position="55"/>
    </location>
</feature>
<feature type="binding site" evidence="1">
    <location>
        <begin position="90"/>
        <end position="95"/>
    </location>
    <ligand>
        <name>NAD(+)</name>
        <dbReference type="ChEBI" id="CHEBI:57540"/>
    </ligand>
</feature>
<gene>
    <name evidence="1" type="primary">rex</name>
    <name type="ordered locus">BAA_0306</name>
</gene>
<proteinExistence type="inferred from homology"/>
<name>REX_BACAA</name>
<accession>C3PAU8</accession>
<comment type="function">
    <text evidence="1">Modulates transcription in response to changes in cellular NADH/NAD(+) redox state.</text>
</comment>
<comment type="subunit">
    <text evidence="1">Homodimer.</text>
</comment>
<comment type="subcellular location">
    <subcellularLocation>
        <location evidence="1">Cytoplasm</location>
    </subcellularLocation>
</comment>
<comment type="similarity">
    <text evidence="1">Belongs to the transcriptional regulatory Rex family.</text>
</comment>
<keyword id="KW-0963">Cytoplasm</keyword>
<keyword id="KW-0238">DNA-binding</keyword>
<keyword id="KW-0520">NAD</keyword>
<keyword id="KW-0678">Repressor</keyword>
<keyword id="KW-0804">Transcription</keyword>
<keyword id="KW-0805">Transcription regulation</keyword>
<dbReference type="EMBL" id="CP001598">
    <property type="protein sequence ID" value="ACQ47658.1"/>
    <property type="molecule type" value="Genomic_DNA"/>
</dbReference>
<dbReference type="RefSeq" id="WP_000437700.1">
    <property type="nucleotide sequence ID" value="NC_012659.1"/>
</dbReference>
<dbReference type="SMR" id="C3PAU8"/>
<dbReference type="GeneID" id="45020317"/>
<dbReference type="KEGG" id="bai:BAA_0306"/>
<dbReference type="HOGENOM" id="CLU_061534_1_1_9"/>
<dbReference type="GO" id="GO:0005737">
    <property type="term" value="C:cytoplasm"/>
    <property type="evidence" value="ECO:0007669"/>
    <property type="project" value="UniProtKB-SubCell"/>
</dbReference>
<dbReference type="GO" id="GO:0003677">
    <property type="term" value="F:DNA binding"/>
    <property type="evidence" value="ECO:0007669"/>
    <property type="project" value="UniProtKB-UniRule"/>
</dbReference>
<dbReference type="GO" id="GO:0003700">
    <property type="term" value="F:DNA-binding transcription factor activity"/>
    <property type="evidence" value="ECO:0007669"/>
    <property type="project" value="UniProtKB-UniRule"/>
</dbReference>
<dbReference type="GO" id="GO:0045892">
    <property type="term" value="P:negative regulation of DNA-templated transcription"/>
    <property type="evidence" value="ECO:0007669"/>
    <property type="project" value="InterPro"/>
</dbReference>
<dbReference type="GO" id="GO:0051775">
    <property type="term" value="P:response to redox state"/>
    <property type="evidence" value="ECO:0007669"/>
    <property type="project" value="InterPro"/>
</dbReference>
<dbReference type="Gene3D" id="3.40.50.720">
    <property type="entry name" value="NAD(P)-binding Rossmann-like Domain"/>
    <property type="match status" value="1"/>
</dbReference>
<dbReference type="Gene3D" id="1.10.10.10">
    <property type="entry name" value="Winged helix-like DNA-binding domain superfamily/Winged helix DNA-binding domain"/>
    <property type="match status" value="1"/>
</dbReference>
<dbReference type="HAMAP" id="MF_01131">
    <property type="entry name" value="Rex"/>
    <property type="match status" value="1"/>
</dbReference>
<dbReference type="InterPro" id="IPR003781">
    <property type="entry name" value="CoA-bd"/>
</dbReference>
<dbReference type="InterPro" id="IPR036291">
    <property type="entry name" value="NAD(P)-bd_dom_sf"/>
</dbReference>
<dbReference type="InterPro" id="IPR009718">
    <property type="entry name" value="Rex_DNA-bd_C_dom"/>
</dbReference>
<dbReference type="InterPro" id="IPR022876">
    <property type="entry name" value="Tscrpt_rep_Rex"/>
</dbReference>
<dbReference type="InterPro" id="IPR036388">
    <property type="entry name" value="WH-like_DNA-bd_sf"/>
</dbReference>
<dbReference type="InterPro" id="IPR036390">
    <property type="entry name" value="WH_DNA-bd_sf"/>
</dbReference>
<dbReference type="NCBIfam" id="NF003989">
    <property type="entry name" value="PRK05472.1-3"/>
    <property type="match status" value="1"/>
</dbReference>
<dbReference type="NCBIfam" id="NF003991">
    <property type="entry name" value="PRK05472.1-5"/>
    <property type="match status" value="1"/>
</dbReference>
<dbReference type="NCBIfam" id="NF003994">
    <property type="entry name" value="PRK05472.2-3"/>
    <property type="match status" value="1"/>
</dbReference>
<dbReference type="NCBIfam" id="NF003995">
    <property type="entry name" value="PRK05472.2-4"/>
    <property type="match status" value="1"/>
</dbReference>
<dbReference type="NCBIfam" id="NF003996">
    <property type="entry name" value="PRK05472.2-5"/>
    <property type="match status" value="1"/>
</dbReference>
<dbReference type="PANTHER" id="PTHR35786">
    <property type="entry name" value="REDOX-SENSING TRANSCRIPTIONAL REPRESSOR REX"/>
    <property type="match status" value="1"/>
</dbReference>
<dbReference type="PANTHER" id="PTHR35786:SF1">
    <property type="entry name" value="REDOX-SENSING TRANSCRIPTIONAL REPRESSOR REX 1"/>
    <property type="match status" value="1"/>
</dbReference>
<dbReference type="Pfam" id="PF02629">
    <property type="entry name" value="CoA_binding"/>
    <property type="match status" value="1"/>
</dbReference>
<dbReference type="Pfam" id="PF06971">
    <property type="entry name" value="Put_DNA-bind_N"/>
    <property type="match status" value="1"/>
</dbReference>
<dbReference type="SMART" id="SM00881">
    <property type="entry name" value="CoA_binding"/>
    <property type="match status" value="1"/>
</dbReference>
<dbReference type="SUPFAM" id="SSF51735">
    <property type="entry name" value="NAD(P)-binding Rossmann-fold domains"/>
    <property type="match status" value="1"/>
</dbReference>
<dbReference type="SUPFAM" id="SSF46785">
    <property type="entry name" value="Winged helix' DNA-binding domain"/>
    <property type="match status" value="1"/>
</dbReference>
<evidence type="ECO:0000255" key="1">
    <source>
        <dbReference type="HAMAP-Rule" id="MF_01131"/>
    </source>
</evidence>
<organism>
    <name type="scientific">Bacillus anthracis (strain A0248)</name>
    <dbReference type="NCBI Taxonomy" id="592021"/>
    <lineage>
        <taxon>Bacteria</taxon>
        <taxon>Bacillati</taxon>
        <taxon>Bacillota</taxon>
        <taxon>Bacilli</taxon>
        <taxon>Bacillales</taxon>
        <taxon>Bacillaceae</taxon>
        <taxon>Bacillus</taxon>
        <taxon>Bacillus cereus group</taxon>
    </lineage>
</organism>
<protein>
    <recommendedName>
        <fullName evidence="1">Redox-sensing transcriptional repressor Rex</fullName>
    </recommendedName>
</protein>